<evidence type="ECO:0000255" key="1">
    <source>
        <dbReference type="HAMAP-Rule" id="MF_01395"/>
    </source>
</evidence>
<evidence type="ECO:0000255" key="2">
    <source>
        <dbReference type="PROSITE-ProRule" id="PRU01136"/>
    </source>
</evidence>
<feature type="chain" id="PRO_0000359043" description="Acetyl-coenzyme A carboxylase carboxyl transferase subunit beta">
    <location>
        <begin position="1"/>
        <end position="297"/>
    </location>
</feature>
<feature type="domain" description="CoA carboxyltransferase N-terminal" evidence="2">
    <location>
        <begin position="27"/>
        <end position="296"/>
    </location>
</feature>
<feature type="zinc finger region" description="C4-type" evidence="1">
    <location>
        <begin position="31"/>
        <end position="53"/>
    </location>
</feature>
<feature type="binding site" evidence="1">
    <location>
        <position position="31"/>
    </location>
    <ligand>
        <name>Zn(2+)</name>
        <dbReference type="ChEBI" id="CHEBI:29105"/>
    </ligand>
</feature>
<feature type="binding site" evidence="1">
    <location>
        <position position="34"/>
    </location>
    <ligand>
        <name>Zn(2+)</name>
        <dbReference type="ChEBI" id="CHEBI:29105"/>
    </ligand>
</feature>
<feature type="binding site" evidence="1">
    <location>
        <position position="50"/>
    </location>
    <ligand>
        <name>Zn(2+)</name>
        <dbReference type="ChEBI" id="CHEBI:29105"/>
    </ligand>
</feature>
<feature type="binding site" evidence="1">
    <location>
        <position position="53"/>
    </location>
    <ligand>
        <name>Zn(2+)</name>
        <dbReference type="ChEBI" id="CHEBI:29105"/>
    </ligand>
</feature>
<dbReference type="EC" id="2.1.3.15" evidence="1"/>
<dbReference type="EMBL" id="CP000949">
    <property type="protein sequence ID" value="ACA72062.1"/>
    <property type="molecule type" value="Genomic_DNA"/>
</dbReference>
<dbReference type="SMR" id="B1J539"/>
<dbReference type="STRING" id="390235.PputW619_1557"/>
<dbReference type="KEGG" id="ppw:PputW619_1557"/>
<dbReference type="eggNOG" id="COG0777">
    <property type="taxonomic scope" value="Bacteria"/>
</dbReference>
<dbReference type="HOGENOM" id="CLU_015486_1_0_6"/>
<dbReference type="OrthoDB" id="9772975at2"/>
<dbReference type="UniPathway" id="UPA00655">
    <property type="reaction ID" value="UER00711"/>
</dbReference>
<dbReference type="GO" id="GO:0009329">
    <property type="term" value="C:acetate CoA-transferase complex"/>
    <property type="evidence" value="ECO:0007669"/>
    <property type="project" value="TreeGrafter"/>
</dbReference>
<dbReference type="GO" id="GO:0003989">
    <property type="term" value="F:acetyl-CoA carboxylase activity"/>
    <property type="evidence" value="ECO:0007669"/>
    <property type="project" value="InterPro"/>
</dbReference>
<dbReference type="GO" id="GO:0005524">
    <property type="term" value="F:ATP binding"/>
    <property type="evidence" value="ECO:0007669"/>
    <property type="project" value="UniProtKB-KW"/>
</dbReference>
<dbReference type="GO" id="GO:0016743">
    <property type="term" value="F:carboxyl- or carbamoyltransferase activity"/>
    <property type="evidence" value="ECO:0007669"/>
    <property type="project" value="UniProtKB-UniRule"/>
</dbReference>
<dbReference type="GO" id="GO:0008270">
    <property type="term" value="F:zinc ion binding"/>
    <property type="evidence" value="ECO:0007669"/>
    <property type="project" value="UniProtKB-UniRule"/>
</dbReference>
<dbReference type="GO" id="GO:0006633">
    <property type="term" value="P:fatty acid biosynthetic process"/>
    <property type="evidence" value="ECO:0007669"/>
    <property type="project" value="UniProtKB-KW"/>
</dbReference>
<dbReference type="GO" id="GO:2001295">
    <property type="term" value="P:malonyl-CoA biosynthetic process"/>
    <property type="evidence" value="ECO:0007669"/>
    <property type="project" value="UniProtKB-UniRule"/>
</dbReference>
<dbReference type="Gene3D" id="3.90.226.10">
    <property type="entry name" value="2-enoyl-CoA Hydratase, Chain A, domain 1"/>
    <property type="match status" value="1"/>
</dbReference>
<dbReference type="HAMAP" id="MF_01395">
    <property type="entry name" value="AcetylCoA_CT_beta"/>
    <property type="match status" value="1"/>
</dbReference>
<dbReference type="InterPro" id="IPR034733">
    <property type="entry name" value="AcCoA_carboxyl_beta"/>
</dbReference>
<dbReference type="InterPro" id="IPR000438">
    <property type="entry name" value="Acetyl_CoA_COase_Trfase_b_su"/>
</dbReference>
<dbReference type="InterPro" id="IPR029045">
    <property type="entry name" value="ClpP/crotonase-like_dom_sf"/>
</dbReference>
<dbReference type="InterPro" id="IPR011762">
    <property type="entry name" value="COA_CT_N"/>
</dbReference>
<dbReference type="InterPro" id="IPR041010">
    <property type="entry name" value="Znf-ACC"/>
</dbReference>
<dbReference type="NCBIfam" id="TIGR00515">
    <property type="entry name" value="accD"/>
    <property type="match status" value="1"/>
</dbReference>
<dbReference type="PANTHER" id="PTHR42995">
    <property type="entry name" value="ACETYL-COENZYME A CARBOXYLASE CARBOXYL TRANSFERASE SUBUNIT BETA, CHLOROPLASTIC"/>
    <property type="match status" value="1"/>
</dbReference>
<dbReference type="PANTHER" id="PTHR42995:SF5">
    <property type="entry name" value="ACETYL-COENZYME A CARBOXYLASE CARBOXYL TRANSFERASE SUBUNIT BETA, CHLOROPLASTIC"/>
    <property type="match status" value="1"/>
</dbReference>
<dbReference type="Pfam" id="PF01039">
    <property type="entry name" value="Carboxyl_trans"/>
    <property type="match status" value="1"/>
</dbReference>
<dbReference type="Pfam" id="PF17848">
    <property type="entry name" value="Zn_ribbon_ACC"/>
    <property type="match status" value="1"/>
</dbReference>
<dbReference type="PRINTS" id="PR01070">
    <property type="entry name" value="ACCCTRFRASEB"/>
</dbReference>
<dbReference type="SUPFAM" id="SSF52096">
    <property type="entry name" value="ClpP/crotonase"/>
    <property type="match status" value="1"/>
</dbReference>
<dbReference type="PROSITE" id="PS50980">
    <property type="entry name" value="COA_CT_NTER"/>
    <property type="match status" value="1"/>
</dbReference>
<comment type="function">
    <text evidence="1">Component of the acetyl coenzyme A carboxylase (ACC) complex. Biotin carboxylase (BC) catalyzes the carboxylation of biotin on its carrier protein (BCCP) and then the CO(2) group is transferred by the transcarboxylase to acetyl-CoA to form malonyl-CoA.</text>
</comment>
<comment type="catalytic activity">
    <reaction evidence="1">
        <text>N(6)-carboxybiotinyl-L-lysyl-[protein] + acetyl-CoA = N(6)-biotinyl-L-lysyl-[protein] + malonyl-CoA</text>
        <dbReference type="Rhea" id="RHEA:54728"/>
        <dbReference type="Rhea" id="RHEA-COMP:10505"/>
        <dbReference type="Rhea" id="RHEA-COMP:10506"/>
        <dbReference type="ChEBI" id="CHEBI:57288"/>
        <dbReference type="ChEBI" id="CHEBI:57384"/>
        <dbReference type="ChEBI" id="CHEBI:83144"/>
        <dbReference type="ChEBI" id="CHEBI:83145"/>
        <dbReference type="EC" id="2.1.3.15"/>
    </reaction>
</comment>
<comment type="cofactor">
    <cofactor evidence="1">
        <name>Zn(2+)</name>
        <dbReference type="ChEBI" id="CHEBI:29105"/>
    </cofactor>
    <text evidence="1">Binds 1 zinc ion per subunit.</text>
</comment>
<comment type="pathway">
    <text evidence="1">Lipid metabolism; malonyl-CoA biosynthesis; malonyl-CoA from acetyl-CoA: step 1/1.</text>
</comment>
<comment type="subunit">
    <text evidence="1">Acetyl-CoA carboxylase is a heterohexamer composed of biotin carboxyl carrier protein (AccB), biotin carboxylase (AccC) and two subunits each of ACCase subunit alpha (AccA) and ACCase subunit beta (AccD).</text>
</comment>
<comment type="subcellular location">
    <subcellularLocation>
        <location evidence="1">Cytoplasm</location>
    </subcellularLocation>
</comment>
<comment type="similarity">
    <text evidence="1">Belongs to the AccD/PCCB family.</text>
</comment>
<name>ACCD_PSEPW</name>
<gene>
    <name evidence="1" type="primary">accD</name>
    <name type="ordered locus">PputW619_1557</name>
</gene>
<keyword id="KW-0067">ATP-binding</keyword>
<keyword id="KW-0963">Cytoplasm</keyword>
<keyword id="KW-0275">Fatty acid biosynthesis</keyword>
<keyword id="KW-0276">Fatty acid metabolism</keyword>
<keyword id="KW-0444">Lipid biosynthesis</keyword>
<keyword id="KW-0443">Lipid metabolism</keyword>
<keyword id="KW-0479">Metal-binding</keyword>
<keyword id="KW-0547">Nucleotide-binding</keyword>
<keyword id="KW-0808">Transferase</keyword>
<keyword id="KW-0862">Zinc</keyword>
<keyword id="KW-0863">Zinc-finger</keyword>
<accession>B1J539</accession>
<sequence>MSNWLVDKLIPSIMRSEVKKSSVPEGLWHKCPACEAVLYRPELEKTLDVCPKCNHHMRIGARQRIDIFLDAEGRAELGAELEPVDRLKFRDGKKYKDRLVGAQKQTGEKDALISMSGTLMGMPIVVSAFEFSFMGGSMGAVVGERFVRAANHALENRCPMICFSASGGARMQEALISLMQMAKTSAVLARLREEGIPFISVLTDPVYGGVSASLAMLGDVIVGEPKALIGFAGPRVIEQTVREKLPEGFQRSEFLLEHGAIDLIISRGELRPRLARLLAQMTGQETPEQAREAAAVA</sequence>
<organism>
    <name type="scientific">Pseudomonas putida (strain W619)</name>
    <dbReference type="NCBI Taxonomy" id="390235"/>
    <lineage>
        <taxon>Bacteria</taxon>
        <taxon>Pseudomonadati</taxon>
        <taxon>Pseudomonadota</taxon>
        <taxon>Gammaproteobacteria</taxon>
        <taxon>Pseudomonadales</taxon>
        <taxon>Pseudomonadaceae</taxon>
        <taxon>Pseudomonas</taxon>
    </lineage>
</organism>
<protein>
    <recommendedName>
        <fullName evidence="1">Acetyl-coenzyme A carboxylase carboxyl transferase subunit beta</fullName>
        <shortName evidence="1">ACCase subunit beta</shortName>
        <shortName evidence="1">Acetyl-CoA carboxylase carboxyltransferase subunit beta</shortName>
        <ecNumber evidence="1">2.1.3.15</ecNumber>
    </recommendedName>
</protein>
<reference key="1">
    <citation type="submission" date="2008-02" db="EMBL/GenBank/DDBJ databases">
        <title>Complete sequence of Pseudomonas putida W619.</title>
        <authorList>
            <person name="Copeland A."/>
            <person name="Lucas S."/>
            <person name="Lapidus A."/>
            <person name="Barry K."/>
            <person name="Detter J.C."/>
            <person name="Glavina del Rio T."/>
            <person name="Dalin E."/>
            <person name="Tice H."/>
            <person name="Pitluck S."/>
            <person name="Chain P."/>
            <person name="Malfatti S."/>
            <person name="Shin M."/>
            <person name="Vergez L."/>
            <person name="Schmutz J."/>
            <person name="Larimer F."/>
            <person name="Land M."/>
            <person name="Hauser L."/>
            <person name="Kyrpides N."/>
            <person name="Kim E."/>
            <person name="Taghavi S."/>
            <person name="Vangronsveld D."/>
            <person name="van der Lelie D."/>
            <person name="Richardson P."/>
        </authorList>
    </citation>
    <scope>NUCLEOTIDE SEQUENCE [LARGE SCALE GENOMIC DNA]</scope>
    <source>
        <strain>W619</strain>
    </source>
</reference>
<proteinExistence type="inferred from homology"/>